<gene>
    <name evidence="14" type="primary">CHRNA5</name>
    <name type="synonym">NACHRA5</name>
</gene>
<dbReference type="EMBL" id="M83712">
    <property type="protein sequence ID" value="AAA58357.1"/>
    <property type="molecule type" value="mRNA"/>
</dbReference>
<dbReference type="EMBL" id="U62434">
    <property type="protein sequence ID" value="AAB40112.1"/>
    <property type="molecule type" value="mRNA"/>
</dbReference>
<dbReference type="EMBL" id="Y08419">
    <property type="protein sequence ID" value="CAA69696.1"/>
    <property type="molecule type" value="mRNA"/>
</dbReference>
<dbReference type="EMBL" id="AJ306481">
    <property type="protein sequence ID" value="CAC34820.1"/>
    <property type="molecule type" value="Genomic_DNA"/>
</dbReference>
<dbReference type="EMBL" id="AJ306482">
    <property type="protein sequence ID" value="CAC34820.1"/>
    <property type="status" value="JOINED"/>
    <property type="molecule type" value="Genomic_DNA"/>
</dbReference>
<dbReference type="EMBL" id="AJ306483">
    <property type="protein sequence ID" value="CAC34820.1"/>
    <property type="status" value="JOINED"/>
    <property type="molecule type" value="Genomic_DNA"/>
</dbReference>
<dbReference type="EMBL" id="AJ306484">
    <property type="protein sequence ID" value="CAC34820.1"/>
    <property type="status" value="JOINED"/>
    <property type="molecule type" value="Genomic_DNA"/>
</dbReference>
<dbReference type="EMBL" id="AJ306485">
    <property type="protein sequence ID" value="CAC34820.1"/>
    <property type="status" value="JOINED"/>
    <property type="molecule type" value="Genomic_DNA"/>
</dbReference>
<dbReference type="EMBL" id="AJ306486">
    <property type="protein sequence ID" value="CAC34820.1"/>
    <property type="status" value="JOINED"/>
    <property type="molecule type" value="Genomic_DNA"/>
</dbReference>
<dbReference type="EMBL" id="BC033639">
    <property type="protein sequence ID" value="AAH33639.1"/>
    <property type="molecule type" value="mRNA"/>
</dbReference>
<dbReference type="CCDS" id="CCDS10304.1"/>
<dbReference type="PIR" id="A38223">
    <property type="entry name" value="A38223"/>
</dbReference>
<dbReference type="RefSeq" id="NP_000736.2">
    <property type="nucleotide sequence ID" value="NM_000745.3"/>
</dbReference>
<dbReference type="SMR" id="P30532"/>
<dbReference type="BioGRID" id="107560">
    <property type="interactions" value="121"/>
</dbReference>
<dbReference type="ComplexPortal" id="CPX-187">
    <property type="entry name" value="Neuronal nicotinic acetylcholine receptor complex, alpha3-alpha5-beta2"/>
</dbReference>
<dbReference type="ComplexPortal" id="CPX-210">
    <property type="entry name" value="Neuronal nicotinic acetylcholine receptor complex, alpha3-alpha5-beta4"/>
</dbReference>
<dbReference type="ComplexPortal" id="CPX-218">
    <property type="entry name" value="Neuronal nicotinic acetylcholine receptor complex, alpha4-alpha5-beta2"/>
</dbReference>
<dbReference type="CORUM" id="P30532"/>
<dbReference type="FunCoup" id="P30532">
    <property type="interactions" value="601"/>
</dbReference>
<dbReference type="IntAct" id="P30532">
    <property type="interactions" value="55"/>
</dbReference>
<dbReference type="STRING" id="9606.ENSP00000299565"/>
<dbReference type="BindingDB" id="P30532"/>
<dbReference type="ChEMBL" id="CHEMBL3038461"/>
<dbReference type="ChEMBL" id="CHEMBL3137272"/>
<dbReference type="ChEMBL" id="CHEMBL3137273"/>
<dbReference type="DrugBank" id="DB00237">
    <property type="generic name" value="Butabarbital"/>
</dbReference>
<dbReference type="DrugBank" id="DB00565">
    <property type="generic name" value="Cisatracurium"/>
</dbReference>
<dbReference type="DrugBank" id="DB00898">
    <property type="generic name" value="Ethanol"/>
</dbReference>
<dbReference type="DrugBank" id="DB00184">
    <property type="generic name" value="Nicotine"/>
</dbReference>
<dbReference type="DrugBank" id="DB00202">
    <property type="generic name" value="Succinylcholine"/>
</dbReference>
<dbReference type="GlyCosmos" id="P30532">
    <property type="glycosylation" value="3 sites, No reported glycans"/>
</dbReference>
<dbReference type="GlyGen" id="P30532">
    <property type="glycosylation" value="3 sites, 2 N-linked glycans (2 sites)"/>
</dbReference>
<dbReference type="iPTMnet" id="P30532"/>
<dbReference type="PhosphoSitePlus" id="P30532"/>
<dbReference type="BioMuta" id="CHRNA5"/>
<dbReference type="DMDM" id="2506126"/>
<dbReference type="jPOST" id="P30532"/>
<dbReference type="MassIVE" id="P30532"/>
<dbReference type="PaxDb" id="9606-ENSP00000299565"/>
<dbReference type="PeptideAtlas" id="P30532"/>
<dbReference type="ProteomicsDB" id="54715"/>
<dbReference type="Pumba" id="P30532"/>
<dbReference type="Antibodypedia" id="15098">
    <property type="antibodies" value="333 antibodies from 35 providers"/>
</dbReference>
<dbReference type="DNASU" id="1138"/>
<dbReference type="Ensembl" id="ENST00000299565.9">
    <property type="protein sequence ID" value="ENSP00000299565.5"/>
    <property type="gene ID" value="ENSG00000169684.13"/>
</dbReference>
<dbReference type="GeneID" id="1138"/>
<dbReference type="KEGG" id="hsa:1138"/>
<dbReference type="MANE-Select" id="ENST00000299565.9">
    <property type="protein sequence ID" value="ENSP00000299565.5"/>
    <property type="RefSeq nucleotide sequence ID" value="NM_000745.4"/>
    <property type="RefSeq protein sequence ID" value="NP_000736.2"/>
</dbReference>
<dbReference type="UCSC" id="uc002bdy.3">
    <property type="organism name" value="human"/>
</dbReference>
<dbReference type="AGR" id="HGNC:1959"/>
<dbReference type="CTD" id="1138"/>
<dbReference type="DisGeNET" id="1138"/>
<dbReference type="GeneCards" id="CHRNA5"/>
<dbReference type="HGNC" id="HGNC:1959">
    <property type="gene designation" value="CHRNA5"/>
</dbReference>
<dbReference type="HPA" id="ENSG00000169684">
    <property type="expression patterns" value="Low tissue specificity"/>
</dbReference>
<dbReference type="MalaCards" id="CHRNA5"/>
<dbReference type="MIM" id="118505">
    <property type="type" value="gene"/>
</dbReference>
<dbReference type="MIM" id="612052">
    <property type="type" value="phenotype"/>
</dbReference>
<dbReference type="neXtProt" id="NX_P30532"/>
<dbReference type="OpenTargets" id="ENSG00000169684"/>
<dbReference type="PharmGKB" id="PA26491"/>
<dbReference type="VEuPathDB" id="HostDB:ENSG00000169684"/>
<dbReference type="eggNOG" id="KOG3645">
    <property type="taxonomic scope" value="Eukaryota"/>
</dbReference>
<dbReference type="GeneTree" id="ENSGT00940000159270"/>
<dbReference type="HOGENOM" id="CLU_018074_1_2_1"/>
<dbReference type="InParanoid" id="P30532"/>
<dbReference type="OMA" id="SCCWYPH"/>
<dbReference type="OrthoDB" id="5975154at2759"/>
<dbReference type="PAN-GO" id="P30532">
    <property type="GO annotations" value="10 GO annotations based on evolutionary models"/>
</dbReference>
<dbReference type="PhylomeDB" id="P30532"/>
<dbReference type="TreeFam" id="TF315605"/>
<dbReference type="PathwayCommons" id="P30532"/>
<dbReference type="Reactome" id="R-HSA-629594">
    <property type="pathway name" value="Highly calcium permeable postsynaptic nicotinic acetylcholine receptors"/>
</dbReference>
<dbReference type="Reactome" id="R-HSA-629597">
    <property type="pathway name" value="Highly calcium permeable nicotinic acetylcholine receptors"/>
</dbReference>
<dbReference type="SignaLink" id="P30532"/>
<dbReference type="BioGRID-ORCS" id="1138">
    <property type="hits" value="8 hits in 1155 CRISPR screens"/>
</dbReference>
<dbReference type="GeneWiki" id="CHRNA5"/>
<dbReference type="GenomeRNAi" id="1138"/>
<dbReference type="Pharos" id="P30532">
    <property type="development level" value="Tbio"/>
</dbReference>
<dbReference type="PRO" id="PR:P30532"/>
<dbReference type="Proteomes" id="UP000005640">
    <property type="component" value="Chromosome 15"/>
</dbReference>
<dbReference type="RNAct" id="P30532">
    <property type="molecule type" value="protein"/>
</dbReference>
<dbReference type="Bgee" id="ENSG00000169684">
    <property type="expression patterns" value="Expressed in ventricular zone and 108 other cell types or tissues"/>
</dbReference>
<dbReference type="ExpressionAtlas" id="P30532">
    <property type="expression patterns" value="baseline and differential"/>
</dbReference>
<dbReference type="GO" id="GO:0005892">
    <property type="term" value="C:acetylcholine-gated channel complex"/>
    <property type="evidence" value="ECO:0000314"/>
    <property type="project" value="UniProt"/>
</dbReference>
<dbReference type="GO" id="GO:0034703">
    <property type="term" value="C:cation channel complex"/>
    <property type="evidence" value="ECO:0000314"/>
    <property type="project" value="UniProt"/>
</dbReference>
<dbReference type="GO" id="GO:0098981">
    <property type="term" value="C:cholinergic synapse"/>
    <property type="evidence" value="ECO:0007669"/>
    <property type="project" value="Ensembl"/>
</dbReference>
<dbReference type="GO" id="GO:0098691">
    <property type="term" value="C:dopaminergic synapse"/>
    <property type="evidence" value="ECO:0007669"/>
    <property type="project" value="Ensembl"/>
</dbReference>
<dbReference type="GO" id="GO:0043005">
    <property type="term" value="C:neuron projection"/>
    <property type="evidence" value="ECO:0000318"/>
    <property type="project" value="GO_Central"/>
</dbReference>
<dbReference type="GO" id="GO:0098878">
    <property type="term" value="C:neurotransmitter receptor complex"/>
    <property type="evidence" value="ECO:0000314"/>
    <property type="project" value="UniProt"/>
</dbReference>
<dbReference type="GO" id="GO:0005886">
    <property type="term" value="C:plasma membrane"/>
    <property type="evidence" value="ECO:0000318"/>
    <property type="project" value="GO_Central"/>
</dbReference>
<dbReference type="GO" id="GO:0045211">
    <property type="term" value="C:postsynaptic membrane"/>
    <property type="evidence" value="ECO:0007669"/>
    <property type="project" value="UniProtKB-KW"/>
</dbReference>
<dbReference type="GO" id="GO:0098793">
    <property type="term" value="C:presynapse"/>
    <property type="evidence" value="ECO:0007669"/>
    <property type="project" value="GOC"/>
</dbReference>
<dbReference type="GO" id="GO:0045202">
    <property type="term" value="C:synapse"/>
    <property type="evidence" value="ECO:0000318"/>
    <property type="project" value="GO_Central"/>
</dbReference>
<dbReference type="GO" id="GO:0015464">
    <property type="term" value="F:acetylcholine receptor activity"/>
    <property type="evidence" value="ECO:0000314"/>
    <property type="project" value="UniProtKB"/>
</dbReference>
<dbReference type="GO" id="GO:0022848">
    <property type="term" value="F:acetylcholine-gated monoatomic cation-selective channel activity"/>
    <property type="evidence" value="ECO:0000318"/>
    <property type="project" value="GO_Central"/>
</dbReference>
<dbReference type="GO" id="GO:0015276">
    <property type="term" value="F:ligand-gated monoatomic ion channel activity"/>
    <property type="evidence" value="ECO:0000304"/>
    <property type="project" value="DFLAT"/>
</dbReference>
<dbReference type="GO" id="GO:0095500">
    <property type="term" value="P:acetylcholine receptor signaling pathway"/>
    <property type="evidence" value="ECO:0000318"/>
    <property type="project" value="GO_Central"/>
</dbReference>
<dbReference type="GO" id="GO:0035095">
    <property type="term" value="P:behavioral response to nicotine"/>
    <property type="evidence" value="ECO:0000315"/>
    <property type="project" value="UniProtKB"/>
</dbReference>
<dbReference type="GO" id="GO:0007268">
    <property type="term" value="P:chemical synaptic transmission"/>
    <property type="evidence" value="ECO:0000304"/>
    <property type="project" value="UniProtKB"/>
</dbReference>
<dbReference type="GO" id="GO:0051899">
    <property type="term" value="P:membrane depolarization"/>
    <property type="evidence" value="ECO:0000318"/>
    <property type="project" value="GO_Central"/>
</dbReference>
<dbReference type="GO" id="GO:0034220">
    <property type="term" value="P:monoatomic ion transmembrane transport"/>
    <property type="evidence" value="ECO:0000318"/>
    <property type="project" value="GO_Central"/>
</dbReference>
<dbReference type="GO" id="GO:0007274">
    <property type="term" value="P:neuromuscular synaptic transmission"/>
    <property type="evidence" value="ECO:0000318"/>
    <property type="project" value="GO_Central"/>
</dbReference>
<dbReference type="GO" id="GO:0099171">
    <property type="term" value="P:presynaptic modulation of chemical synaptic transmission"/>
    <property type="evidence" value="ECO:0007669"/>
    <property type="project" value="Ensembl"/>
</dbReference>
<dbReference type="GO" id="GO:0035094">
    <property type="term" value="P:response to nicotine"/>
    <property type="evidence" value="ECO:0000318"/>
    <property type="project" value="GO_Central"/>
</dbReference>
<dbReference type="GO" id="GO:0007165">
    <property type="term" value="P:signal transduction"/>
    <property type="evidence" value="ECO:0000303"/>
    <property type="project" value="UniProtKB"/>
</dbReference>
<dbReference type="GO" id="GO:0007271">
    <property type="term" value="P:synaptic transmission, cholinergic"/>
    <property type="evidence" value="ECO:0000318"/>
    <property type="project" value="GO_Central"/>
</dbReference>
<dbReference type="CDD" id="cd19018">
    <property type="entry name" value="LGIC_ECD_nAChR_A5"/>
    <property type="match status" value="1"/>
</dbReference>
<dbReference type="CDD" id="cd19064">
    <property type="entry name" value="LGIC_TM_nAChR"/>
    <property type="match status" value="1"/>
</dbReference>
<dbReference type="FunFam" id="1.20.58.390:FF:000041">
    <property type="entry name" value="Neuronal acetylcholine receptor subunit alpha-5"/>
    <property type="match status" value="1"/>
</dbReference>
<dbReference type="FunFam" id="2.70.170.10:FF:000047">
    <property type="entry name" value="neuronal acetylcholine receptor subunit alpha-5 isoform X2"/>
    <property type="match status" value="1"/>
</dbReference>
<dbReference type="FunFam" id="1.20.58.390:FF:000001">
    <property type="entry name" value="Neuronal nicotinic acetylcholine receptor subunit 3"/>
    <property type="match status" value="1"/>
</dbReference>
<dbReference type="Gene3D" id="2.70.170.10">
    <property type="entry name" value="Neurotransmitter-gated ion-channel ligand-binding domain"/>
    <property type="match status" value="1"/>
</dbReference>
<dbReference type="Gene3D" id="1.20.58.390">
    <property type="entry name" value="Neurotransmitter-gated ion-channel transmembrane domain"/>
    <property type="match status" value="2"/>
</dbReference>
<dbReference type="InterPro" id="IPR006202">
    <property type="entry name" value="Neur_chan_lig-bd"/>
</dbReference>
<dbReference type="InterPro" id="IPR036734">
    <property type="entry name" value="Neur_chan_lig-bd_sf"/>
</dbReference>
<dbReference type="InterPro" id="IPR006201">
    <property type="entry name" value="Neur_channel"/>
</dbReference>
<dbReference type="InterPro" id="IPR036719">
    <property type="entry name" value="Neuro-gated_channel_TM_sf"/>
</dbReference>
<dbReference type="InterPro" id="IPR038050">
    <property type="entry name" value="Neuro_actylchol_rec"/>
</dbReference>
<dbReference type="InterPro" id="IPR006029">
    <property type="entry name" value="Neurotrans-gated_channel_TM"/>
</dbReference>
<dbReference type="InterPro" id="IPR018000">
    <property type="entry name" value="Neurotransmitter_ion_chnl_CS"/>
</dbReference>
<dbReference type="InterPro" id="IPR002394">
    <property type="entry name" value="Nicotinic_acetylcholine_rcpt"/>
</dbReference>
<dbReference type="NCBIfam" id="TIGR00860">
    <property type="entry name" value="LIC"/>
    <property type="match status" value="1"/>
</dbReference>
<dbReference type="PANTHER" id="PTHR18945">
    <property type="entry name" value="NEUROTRANSMITTER GATED ION CHANNEL"/>
    <property type="match status" value="1"/>
</dbReference>
<dbReference type="Pfam" id="PF02931">
    <property type="entry name" value="Neur_chan_LBD"/>
    <property type="match status" value="1"/>
</dbReference>
<dbReference type="Pfam" id="PF02932">
    <property type="entry name" value="Neur_chan_memb"/>
    <property type="match status" value="2"/>
</dbReference>
<dbReference type="PRINTS" id="PR00254">
    <property type="entry name" value="NICOTINICR"/>
</dbReference>
<dbReference type="PRINTS" id="PR00252">
    <property type="entry name" value="NRIONCHANNEL"/>
</dbReference>
<dbReference type="SUPFAM" id="SSF90112">
    <property type="entry name" value="Neurotransmitter-gated ion-channel transmembrane pore"/>
    <property type="match status" value="1"/>
</dbReference>
<dbReference type="SUPFAM" id="SSF63712">
    <property type="entry name" value="Nicotinic receptor ligand binding domain-like"/>
    <property type="match status" value="1"/>
</dbReference>
<dbReference type="PROSITE" id="PS00236">
    <property type="entry name" value="NEUROTR_ION_CHANNEL"/>
    <property type="match status" value="1"/>
</dbReference>
<sequence>MAARGSGPRALRLLLLVQLVAGRCGLAGAAGGAQRGLSEPSSIAKHEDSLLKDLFQDYERWVRPVEHLNDKIKIKFGLAISQLVDVDEKNQLMTTNVWLKQEWIDVKLRWNPDDYGGIKVIRVPSDSVWTPDIVLFDNADGRFEGTSTKTVIRYNGTVTWTPPANYKSSCTIDVTFFPFDLQNCSMKFGSWTYDGSQVDIILEDQDVDKRDFFDNGEWEIVSATGSKGNRTDSCCWYPYVTYSFVIKRLPLFYTLFLIIPCIGLSFLTVLVFYLPSNEGEKICLCTSVLVSLTVFLLVIEEIIPSSSKVIPLIGEYLVFTMIFVTLSIMVTVFAINIHHRSSSTHNAMAPLVRKIFLHTLPKLLCMRSHVDRYFTQKEETESGSGPKSSRNTLEAALDSIRYITRHIMKENDVREVVEDWKFIAQVLDRMFLWTFLFVSIVGSLGLFVPVIYKWANILIPVHIGNANK</sequence>
<feature type="signal peptide" evidence="4">
    <location>
        <begin position="1"/>
        <end position="22"/>
    </location>
</feature>
<feature type="chain" id="PRO_0000000356" description="Neuronal acetylcholine receptor subunit alpha-5">
    <location>
        <begin position="23"/>
        <end position="468"/>
    </location>
</feature>
<feature type="topological domain" description="Extracellular" evidence="4">
    <location>
        <begin position="23"/>
        <end position="254"/>
    </location>
</feature>
<feature type="transmembrane region" description="Helical" evidence="4">
    <location>
        <begin position="255"/>
        <end position="275"/>
    </location>
</feature>
<feature type="transmembrane region" description="Helical" evidence="4">
    <location>
        <begin position="282"/>
        <end position="302"/>
    </location>
</feature>
<feature type="transmembrane region" description="Helical" evidence="4">
    <location>
        <begin position="317"/>
        <end position="337"/>
    </location>
</feature>
<feature type="topological domain" description="Cytoplasmic" evidence="4">
    <location>
        <begin position="338"/>
        <end position="429"/>
    </location>
</feature>
<feature type="transmembrane region" description="Helical" evidence="4">
    <location>
        <begin position="430"/>
        <end position="451"/>
    </location>
</feature>
<feature type="topological domain" description="Extracellular" evidence="4">
    <location>
        <begin position="452"/>
        <end position="468"/>
    </location>
</feature>
<feature type="glycosylation site" description="N-linked (GlcNAc...) asparagine" evidence="4">
    <location>
        <position position="155"/>
    </location>
</feature>
<feature type="glycosylation site" description="N-linked (GlcNAc...) asparagine" evidence="4">
    <location>
        <position position="183"/>
    </location>
</feature>
<feature type="glycosylation site" description="N-linked (GlcNAc...) asparagine" evidence="4">
    <location>
        <position position="229"/>
    </location>
</feature>
<feature type="disulfide bond" evidence="2">
    <location>
        <begin position="170"/>
        <end position="184"/>
    </location>
</feature>
<feature type="disulfide bond" description="Associated with receptor activation" evidence="2">
    <location>
        <begin position="234"/>
        <end position="235"/>
    </location>
</feature>
<feature type="sequence variant" id="VAR_046211" description="In dbSNP:rs2229961.">
    <original>V</original>
    <variation>I</variation>
    <location>
        <position position="134"/>
    </location>
</feature>
<feature type="sequence variant" id="VAR_046212" description="Risk factor for lung cancer; decreased calcium permeability and fast desensitization in (CHRNA4:CHRNB2)2:CHRNA5 but not in (CHRNA3:CHRNB4)2:CHRNA5 or (CHRNA3:CHRNB24)2:CHRNA5 AChR; no effect on activation by nicotine; dbSNP:rs16969968." evidence="8 11 12">
    <original>D</original>
    <variation>N</variation>
    <location>
        <position position="398"/>
    </location>
</feature>
<feature type="sequence conflict" description="In Ref. 1; AAA58357." evidence="13" ref="1">
    <original>RCGLAGAAGGAQ</original>
    <variation>ALRSSRARRAAR</variation>
    <location>
        <begin position="23"/>
        <end position="34"/>
    </location>
</feature>
<feature type="sequence conflict" description="In Ref. 1; AAA58357." evidence="13" ref="1">
    <original>V</original>
    <variation>S</variation>
    <location>
        <position position="128"/>
    </location>
</feature>
<feature type="sequence conflict" description="In Ref. 1; AAA58357." evidence="13" ref="1">
    <original>C</original>
    <variation>S</variation>
    <location>
        <position position="365"/>
    </location>
</feature>
<feature type="sequence conflict" description="In Ref. 1; AAA58357." evidence="13" ref="1">
    <original>R</original>
    <variation>T</variation>
    <location>
        <position position="405"/>
    </location>
</feature>
<organism>
    <name type="scientific">Homo sapiens</name>
    <name type="common">Human</name>
    <dbReference type="NCBI Taxonomy" id="9606"/>
    <lineage>
        <taxon>Eukaryota</taxon>
        <taxon>Metazoa</taxon>
        <taxon>Chordata</taxon>
        <taxon>Craniata</taxon>
        <taxon>Vertebrata</taxon>
        <taxon>Euteleostomi</taxon>
        <taxon>Mammalia</taxon>
        <taxon>Eutheria</taxon>
        <taxon>Euarchontoglires</taxon>
        <taxon>Primates</taxon>
        <taxon>Haplorrhini</taxon>
        <taxon>Catarrhini</taxon>
        <taxon>Hominidae</taxon>
        <taxon>Homo</taxon>
    </lineage>
</organism>
<comment type="function">
    <text evidence="8 10">Component of neuronal acetylcholine receptors (nAChRs) that function as pentameric, ligand-gated cation channels with high calcium permeability among other activities. nAChRs are excitatory neurotrasnmitter receptors formed by a collection of nAChR subunits known to mediate synaptic transmission in the nervous system and the neuromuscular junction. Each nAchR subunit confers differential attributes to channel properties, including activation, deactivation and desensitization kinetics, pH sensitivity, cation permeability, and binding to allosteric modulators (PubMed:20881005, PubMed:8663494). Has an accessory rather than functional role and is only able to form functional nAChRs when co-assembled with another beta subunit (PubMed:20881005, PubMed:8663494). Participates in pentameric assemblies along with CHRNA3, CHRNA4, CHRNB2 and CHRNB4 (PubMed:20881005, PubMed:8663494). Increases receptor sensitivity to acetylcholine and nicotine when associated with CHRNA4 and CHRNB2 (PubMed:8663494). Plays a role in nicotine addiction (PubMed:20881005).</text>
</comment>
<comment type="catalytic activity">
    <reaction evidence="8">
        <text>Ca(2+)(in) = Ca(2+)(out)</text>
        <dbReference type="Rhea" id="RHEA:29671"/>
        <dbReference type="ChEBI" id="CHEBI:29108"/>
    </reaction>
</comment>
<comment type="catalytic activity">
    <reaction evidence="1">
        <text>K(+)(in) = K(+)(out)</text>
        <dbReference type="Rhea" id="RHEA:29463"/>
        <dbReference type="ChEBI" id="CHEBI:29103"/>
    </reaction>
</comment>
<comment type="catalytic activity">
    <reaction evidence="3">
        <text>Na(+)(in) = Na(+)(out)</text>
        <dbReference type="Rhea" id="RHEA:34963"/>
        <dbReference type="ChEBI" id="CHEBI:29101"/>
    </reaction>
</comment>
<comment type="activity regulation">
    <text evidence="8 10">Activated by a myriad of ligands such as acetylcholine, cytisine, nicotine, choline and epibatidine.</text>
</comment>
<comment type="subunit">
    <text evidence="8 9 10">Neuronal AChR that forms heteropentamers composed of two different type of subunits: alpha and non-alpha (beta). CHRNA5/alpha-5 subunit is only able to form functional nAChRs when co-assembled with another alpha subunit, can be combined to CHRNA4/alpha-4 or CHRNA3/alpha-3 and CHRNB4/beta-4 or CHRNB2/beta-2 to give rise to functional receptors (PubMed:20881005, PubMed:8663494). Interacts with LYPD6 (PubMed:27344019).</text>
</comment>
<comment type="interaction">
    <interactant intactId="EBI-6657490">
        <id>P30532</id>
    </interactant>
    <interactant intactId="EBI-9008612">
        <id>P17787</id>
        <label>CHRNB2</label>
    </interactant>
    <organismsDiffer>false</organismsDiffer>
    <experiments>4</experiments>
</comment>
<comment type="subcellular location">
    <subcellularLocation>
        <location evidence="2">Synaptic cell membrane</location>
        <topology evidence="4">Multi-pass membrane protein</topology>
    </subcellularLocation>
    <subcellularLocation>
        <location evidence="2">Cell membrane</location>
        <topology evidence="4">Multi-pass membrane protein</topology>
    </subcellularLocation>
</comment>
<comment type="polymorphism">
    <text evidence="5 6 7 8">Genetic variations in CHRNA5 have been associated with susceptibility to smoking-related behavioral traits and lung cancer, contributing to the smoking quantitative trait locus 3 (SQTL3) [MIM:612052].</text>
</comment>
<comment type="similarity">
    <text evidence="13">Belongs to the ligand-gated ion channel (TC 1.A.9) family. Acetylcholine receptor (TC 1.A.9.1) subfamily. Alpha-5/CHRNA5 sub-subfamily.</text>
</comment>
<keyword id="KW-1003">Cell membrane</keyword>
<keyword id="KW-1015">Disulfide bond</keyword>
<keyword id="KW-0325">Glycoprotein</keyword>
<keyword id="KW-0407">Ion channel</keyword>
<keyword id="KW-0406">Ion transport</keyword>
<keyword id="KW-1071">Ligand-gated ion channel</keyword>
<keyword id="KW-0472">Membrane</keyword>
<keyword id="KW-1267">Proteomics identification</keyword>
<keyword id="KW-0675">Receptor</keyword>
<keyword id="KW-1185">Reference proteome</keyword>
<keyword id="KW-0732">Signal</keyword>
<keyword id="KW-0770">Synapse</keyword>
<keyword id="KW-0812">Transmembrane</keyword>
<keyword id="KW-1133">Transmembrane helix</keyword>
<keyword id="KW-0813">Transport</keyword>
<name>ACHA5_HUMAN</name>
<proteinExistence type="evidence at protein level"/>
<evidence type="ECO:0000250" key="1">
    <source>
        <dbReference type="UniProtKB" id="P02709"/>
    </source>
</evidence>
<evidence type="ECO:0000250" key="2">
    <source>
        <dbReference type="UniProtKB" id="P32297"/>
    </source>
</evidence>
<evidence type="ECO:0000250" key="3">
    <source>
        <dbReference type="UniProtKB" id="P43681"/>
    </source>
</evidence>
<evidence type="ECO:0000255" key="4"/>
<evidence type="ECO:0000269" key="5">
    <source>
    </source>
</evidence>
<evidence type="ECO:0000269" key="6">
    <source>
    </source>
</evidence>
<evidence type="ECO:0000269" key="7">
    <source>
    </source>
</evidence>
<evidence type="ECO:0000269" key="8">
    <source>
    </source>
</evidence>
<evidence type="ECO:0000269" key="9">
    <source>
    </source>
</evidence>
<evidence type="ECO:0000269" key="10">
    <source>
    </source>
</evidence>
<evidence type="ECO:0000269" key="11">
    <source>
    </source>
</evidence>
<evidence type="ECO:0000269" key="12">
    <source ref="4"/>
</evidence>
<evidence type="ECO:0000305" key="13"/>
<evidence type="ECO:0000312" key="14">
    <source>
        <dbReference type="HGNC" id="HGNC:1959"/>
    </source>
</evidence>
<reference key="1">
    <citation type="journal article" date="1992" name="Proc. Natl. Acad. Sci. U.S.A.">
        <title>Neuronal-type alpha-bungarotoxin receptors and the alpha 5-nicotinic receptor subunit gene are expressed in neuronal and nonneuronal human cell lines.</title>
        <authorList>
            <person name="Chini B."/>
            <person name="Clementi F."/>
            <person name="Hukovic N."/>
            <person name="Sher E."/>
        </authorList>
    </citation>
    <scope>NUCLEOTIDE SEQUENCE [MRNA]</scope>
</reference>
<reference key="2">
    <citation type="journal article" date="1996" name="J. Mol. Neurosci.">
        <title>Comparative structure of human neuronal alpha 2-alpha 7 and beta 2-beta 4 nicotinic acetylcholine receptor subunits and functional expression of the alpha 2, alpha 3, alpha 4, alpha 7, beta 2, and beta 4 subunits.</title>
        <authorList>
            <person name="Elliott K.J."/>
            <person name="Ellis S.B."/>
            <person name="Berckhan K.J."/>
            <person name="Urrutia A."/>
            <person name="Chavez-Noriega L.E."/>
            <person name="Johnson E.C."/>
            <person name="Velicelebi G."/>
            <person name="Harpold M.M."/>
        </authorList>
    </citation>
    <scope>NUCLEOTIDE SEQUENCE [MRNA]</scope>
    <scope>VARIANT ASN-398</scope>
</reference>
<reference key="3">
    <citation type="journal article" date="1997" name="FEBS Lett.">
        <title>Cloning and sequence of full-length cDNAs encoding the human neuronal nicotinic acetylcholine receptor (nAChR) subunits beta3 and beta4 and expression of seven nAChR subunits in the human neuroblastoma cell line SH-SY5Y and/or IMR-32.</title>
        <authorList>
            <person name="Groot Kormelink P.J."/>
            <person name="Luyten W.H.M.L."/>
        </authorList>
    </citation>
    <scope>NUCLEOTIDE SEQUENCE [MRNA]</scope>
</reference>
<reference key="4">
    <citation type="submission" date="2001-03" db="EMBL/GenBank/DDBJ databases">
        <title>Characterization of the genomic structure of human nicotinic acetylcholine receptor CHRNA5/A3/B4 gene cluster: identification of two novel introns in the 3' untranslated region of CHRNA3 and of a tail-to-tail overlap between CHRNA3 and CHRNA5.</title>
        <authorList>
            <person name="Duga S."/>
            <person name="Solda G."/>
            <person name="Asselta R."/>
            <person name="Bonati M.T."/>
            <person name="Dalpra L."/>
            <person name="Malcovati M."/>
            <person name="Tenchini M.L."/>
        </authorList>
    </citation>
    <scope>NUCLEOTIDE SEQUENCE [GENOMIC DNA]</scope>
    <scope>VARIANT ASN-398</scope>
</reference>
<reference key="5">
    <citation type="journal article" date="2004" name="Genome Res.">
        <title>The status, quality, and expansion of the NIH full-length cDNA project: the Mammalian Gene Collection (MGC).</title>
        <authorList>
            <consortium name="The MGC Project Team"/>
        </authorList>
    </citation>
    <scope>NUCLEOTIDE SEQUENCE [LARGE SCALE MRNA]</scope>
    <source>
        <tissue>Eye</tissue>
    </source>
</reference>
<reference key="6">
    <citation type="journal article" date="1996" name="J. Biol. Chem.">
        <title>Assembly of human neuronal nicotinic receptor alpha5 subunits with alpha3, beta2, and beta4 subunits.</title>
        <authorList>
            <person name="Wang F."/>
            <person name="Gerzanich V."/>
            <person name="Wells G.B."/>
            <person name="Anand R."/>
            <person name="Peng X."/>
            <person name="Keyser K."/>
            <person name="Lindstrom J."/>
        </authorList>
    </citation>
    <scope>FUNCTION</scope>
    <scope>SUBUNIT</scope>
</reference>
<reference key="7">
    <citation type="journal article" date="2016" name="J. Neurochem.">
        <title>Functional interaction between Lypd6 and nicotinic acetylcholine receptors.</title>
        <authorList>
            <person name="Arvaniti M."/>
            <person name="Jensen M.M."/>
            <person name="Soni N."/>
            <person name="Wang H."/>
            <person name="Klein A.B."/>
            <person name="Thiriet N."/>
            <person name="Pinborg L.H."/>
            <person name="Muldoon P.P."/>
            <person name="Wienecke J."/>
            <person name="Imad Damaj M."/>
            <person name="Kohlmeier K.A."/>
            <person name="Gondre-Lewis M.C."/>
            <person name="Mikkelsen J.D."/>
            <person name="Thomsen M.S."/>
        </authorList>
    </citation>
    <scope>INTERACTION WITH LYPD6</scope>
</reference>
<reference key="8">
    <citation type="journal article" date="2008" name="Nature">
        <title>Genomics: when the smoke clears.</title>
        <authorList>
            <person name="Chanock S.J."/>
            <person name="Hunter D.J."/>
        </authorList>
    </citation>
    <scope>INVOLVEMENT IN SQTL3 AND LUNG CANCER</scope>
</reference>
<reference key="9">
    <citation type="journal article" date="2008" name="Nature">
        <title>A susceptibility locus for lung cancer maps to nicotinic acetylcholine receptor subunit genes on 15q25.</title>
        <authorList>
            <person name="Hung R.J."/>
            <person name="McKay J.D."/>
            <person name="Gaborieau V."/>
            <person name="Boffetta P."/>
            <person name="Hashibe M."/>
            <person name="Zaridze D."/>
            <person name="Mukeria A."/>
            <person name="Szeszenia-Dabrowska N."/>
            <person name="Lissowska J."/>
            <person name="Rudnai P."/>
            <person name="Fabianova E."/>
            <person name="Mates D."/>
            <person name="Bencko V."/>
            <person name="Foretova L."/>
            <person name="Janout V."/>
            <person name="Chen C."/>
            <person name="Goodman G."/>
            <person name="Field J.K."/>
            <person name="Liloglou T."/>
            <person name="Xinarianos G."/>
            <person name="Cassidy A."/>
            <person name="McLaughlin J."/>
            <person name="Liu G."/>
            <person name="Narod S."/>
            <person name="Krokan H.E."/>
            <person name="Skorpen F."/>
            <person name="Elvestad M.B."/>
            <person name="Hveem K."/>
            <person name="Vatten L."/>
            <person name="Linseisen J."/>
            <person name="Clavel-Chapelon F."/>
            <person name="Vineis P."/>
            <person name="Bueno-de-Mesquita H.B."/>
            <person name="Lund E."/>
            <person name="Martinez C."/>
            <person name="Bingham S."/>
            <person name="Rasmuson T."/>
            <person name="Hainaut P."/>
            <person name="Riboli E."/>
            <person name="Ahrens W."/>
            <person name="Benhamou S."/>
            <person name="Lagiou P."/>
            <person name="Trichopoulos D."/>
            <person name="Holcatova I."/>
            <person name="Merletti F."/>
            <person name="Kjaerheim K."/>
            <person name="Agudo A."/>
            <person name="Macfarlane G."/>
            <person name="Talamini R."/>
            <person name="Simonato L."/>
            <person name="Lowry R."/>
            <person name="Conway D.I."/>
            <person name="Znaor A."/>
            <person name="Healy C."/>
            <person name="Zelenika D."/>
            <person name="Boland A."/>
            <person name="Delepine M."/>
            <person name="Foglio M."/>
            <person name="Lechner D."/>
            <person name="Matsuda F."/>
            <person name="Blanche H."/>
            <person name="Gut I."/>
            <person name="Heath S."/>
            <person name="Lathrop M."/>
            <person name="Brennan P."/>
        </authorList>
    </citation>
    <scope>INVOLVEMENT IN SQTL3 AND LUNG CANCER</scope>
</reference>
<reference key="10">
    <citation type="journal article" date="2008" name="Nat. Genet.">
        <title>Genome-wide association scan of tag SNPs identifies a susceptibility locus for lung cancer at 15q25.1.</title>
        <authorList>
            <person name="Amos C.I."/>
            <person name="Wu X."/>
            <person name="Broderick P."/>
            <person name="Gorlov I.P."/>
            <person name="Gu J."/>
            <person name="Eisen T."/>
            <person name="Dong Q."/>
            <person name="Zhang Q."/>
            <person name="Gu X."/>
            <person name="Vijayakrishnan J."/>
            <person name="Sullivan K."/>
            <person name="Matakidou A."/>
            <person name="Wang Y."/>
            <person name="Mills G."/>
            <person name="Doheny K."/>
            <person name="Tsai Y.-Y."/>
            <person name="Chen W.V."/>
            <person name="Shete S."/>
            <person name="Spitz M.R."/>
            <person name="Houlston R.S."/>
        </authorList>
    </citation>
    <scope>INVOLVEMENT IN SQTL3 AND LUNG CANCER</scope>
</reference>
<reference key="11">
    <citation type="journal article" date="2011" name="Mol. Pharmacol.">
        <title>Acetylcholine receptor (AChR) alpha5 subunit variant associated with risk for nicotine dependence and lung cancer reduces (alpha4beta2)(2)alpha5 AChR function.</title>
        <authorList>
            <person name="Kuryatov A."/>
            <person name="Berrettini W."/>
            <person name="Lindstrom J."/>
        </authorList>
    </citation>
    <scope>FUNCTION</scope>
    <scope>CATALYTIC ACTIVITY</scope>
    <scope>SUBUNIT</scope>
    <scope>CHARACTERIZATION OF VARIANT ASN-398</scope>
    <scope>INVOLVEMENT IN SQTL3 AND LUNG CANCER</scope>
</reference>
<accession>P30532</accession>
<accession>Q15824</accession>
<accession>Q99554</accession>
<protein>
    <recommendedName>
        <fullName>Neuronal acetylcholine receptor subunit alpha-5</fullName>
    </recommendedName>
</protein>